<sequence length="59" mass="6514">MFAGLPSLSHEQQQKAVERIQELMSQGMSSGEAIAQVAGELRANHTGERIVARFEDEDE</sequence>
<dbReference type="EMBL" id="AM933173">
    <property type="protein sequence ID" value="CAR37171.1"/>
    <property type="molecule type" value="Genomic_DNA"/>
</dbReference>
<dbReference type="RefSeq" id="WP_000457328.1">
    <property type="nucleotide sequence ID" value="NC_011274.1"/>
</dbReference>
<dbReference type="SMR" id="B5R8X8"/>
<dbReference type="KEGG" id="seg:SG1294"/>
<dbReference type="HOGENOM" id="CLU_185263_0_0_6"/>
<dbReference type="Proteomes" id="UP000008321">
    <property type="component" value="Chromosome"/>
</dbReference>
<dbReference type="HAMAP" id="MF_00507">
    <property type="entry name" value="UPF0181"/>
    <property type="match status" value="1"/>
</dbReference>
<dbReference type="InterPro" id="IPR005371">
    <property type="entry name" value="UPF0181"/>
</dbReference>
<dbReference type="NCBIfam" id="NF003476">
    <property type="entry name" value="PRK05114.1"/>
    <property type="match status" value="1"/>
</dbReference>
<dbReference type="Pfam" id="PF03701">
    <property type="entry name" value="UPF0181"/>
    <property type="match status" value="1"/>
</dbReference>
<protein>
    <recommendedName>
        <fullName evidence="1">UPF0181 protein YoaH</fullName>
    </recommendedName>
</protein>
<evidence type="ECO:0000255" key="1">
    <source>
        <dbReference type="HAMAP-Rule" id="MF_00507"/>
    </source>
</evidence>
<accession>B5R8X8</accession>
<proteinExistence type="inferred from homology"/>
<gene>
    <name evidence="1" type="primary">yoaH</name>
    <name type="ordered locus">SG1294</name>
</gene>
<feature type="chain" id="PRO_1000127056" description="UPF0181 protein YoaH">
    <location>
        <begin position="1"/>
        <end position="59"/>
    </location>
</feature>
<name>YOAH_SALG2</name>
<comment type="similarity">
    <text evidence="1">Belongs to the UPF0181 family.</text>
</comment>
<organism>
    <name type="scientific">Salmonella gallinarum (strain 287/91 / NCTC 13346)</name>
    <dbReference type="NCBI Taxonomy" id="550538"/>
    <lineage>
        <taxon>Bacteria</taxon>
        <taxon>Pseudomonadati</taxon>
        <taxon>Pseudomonadota</taxon>
        <taxon>Gammaproteobacteria</taxon>
        <taxon>Enterobacterales</taxon>
        <taxon>Enterobacteriaceae</taxon>
        <taxon>Salmonella</taxon>
    </lineage>
</organism>
<reference key="1">
    <citation type="journal article" date="2008" name="Genome Res.">
        <title>Comparative genome analysis of Salmonella enteritidis PT4 and Salmonella gallinarum 287/91 provides insights into evolutionary and host adaptation pathways.</title>
        <authorList>
            <person name="Thomson N.R."/>
            <person name="Clayton D.J."/>
            <person name="Windhorst D."/>
            <person name="Vernikos G."/>
            <person name="Davidson S."/>
            <person name="Churcher C."/>
            <person name="Quail M.A."/>
            <person name="Stevens M."/>
            <person name="Jones M.A."/>
            <person name="Watson M."/>
            <person name="Barron A."/>
            <person name="Layton A."/>
            <person name="Pickard D."/>
            <person name="Kingsley R.A."/>
            <person name="Bignell A."/>
            <person name="Clark L."/>
            <person name="Harris B."/>
            <person name="Ormond D."/>
            <person name="Abdellah Z."/>
            <person name="Brooks K."/>
            <person name="Cherevach I."/>
            <person name="Chillingworth T."/>
            <person name="Woodward J."/>
            <person name="Norberczak H."/>
            <person name="Lord A."/>
            <person name="Arrowsmith C."/>
            <person name="Jagels K."/>
            <person name="Moule S."/>
            <person name="Mungall K."/>
            <person name="Saunders M."/>
            <person name="Whitehead S."/>
            <person name="Chabalgoity J.A."/>
            <person name="Maskell D."/>
            <person name="Humphreys T."/>
            <person name="Roberts M."/>
            <person name="Barrow P.A."/>
            <person name="Dougan G."/>
            <person name="Parkhill J."/>
        </authorList>
    </citation>
    <scope>NUCLEOTIDE SEQUENCE [LARGE SCALE GENOMIC DNA]</scope>
    <source>
        <strain>287/91 / NCTC 13346</strain>
    </source>
</reference>